<sequence>MGNKNIKPSKENRLSILSKDKMDSFKRGSWATSSFREKSRATIQRFSSLRREHIKVDHPDKFLELKRGIYEIIQKSSSIDVDKRTKLMSNIKTMMINPFMIEGLMTSLENLDPDNKMSYSSVMILGEFDIINISDNEAAFEFINSLLKSLLLLNTRQLKLLEYSISNDLLYAHINALEYIIKNTFNVPERQLILRGQYLTPIFSDLLKYAGLTIKSNILMWNKQFIKPVSDLYTSIRLLYCVTV</sequence>
<comment type="similarity">
    <text evidence="1">Belongs to the orthopoxvirus A47 protein family.</text>
</comment>
<organismHost>
    <name type="scientific">Homo sapiens</name>
    <name type="common">Human</name>
    <dbReference type="NCBI Taxonomy" id="9606"/>
</organismHost>
<proteinExistence type="inferred from homology"/>
<name>A47_VACCC</name>
<dbReference type="EMBL" id="M35027">
    <property type="protein sequence ID" value="AAA48179.1"/>
    <property type="molecule type" value="Genomic_DNA"/>
</dbReference>
<dbReference type="PIR" id="D42522">
    <property type="entry name" value="D42522"/>
</dbReference>
<dbReference type="SMR" id="P21067"/>
<dbReference type="Proteomes" id="UP000008269">
    <property type="component" value="Segment"/>
</dbReference>
<dbReference type="InterPro" id="IPR009402">
    <property type="entry name" value="Orthopox_A47"/>
</dbReference>
<dbReference type="Pfam" id="PF06334">
    <property type="entry name" value="Orthopox_A47"/>
    <property type="match status" value="1"/>
</dbReference>
<organism>
    <name type="scientific">Vaccinia virus (strain Copenhagen)</name>
    <name type="common">VACV</name>
    <dbReference type="NCBI Taxonomy" id="10249"/>
    <lineage>
        <taxon>Viruses</taxon>
        <taxon>Varidnaviria</taxon>
        <taxon>Bamfordvirae</taxon>
        <taxon>Nucleocytoviricota</taxon>
        <taxon>Pokkesviricetes</taxon>
        <taxon>Chitovirales</taxon>
        <taxon>Poxviridae</taxon>
        <taxon>Chordopoxvirinae</taxon>
        <taxon>Orthopoxvirus</taxon>
        <taxon>Vaccinia virus</taxon>
    </lineage>
</organism>
<evidence type="ECO:0000305" key="1"/>
<accession>P21067</accession>
<gene>
    <name type="ORF">A47L</name>
</gene>
<reference key="1">
    <citation type="journal article" date="1990" name="Virology">
        <title>The complete DNA sequence of vaccinia virus.</title>
        <authorList>
            <person name="Goebel S.J."/>
            <person name="Johnson G.P."/>
            <person name="Perkus M.E."/>
            <person name="Davis S.W."/>
            <person name="Winslow J.P."/>
            <person name="Paoletti E."/>
        </authorList>
    </citation>
    <scope>NUCLEOTIDE SEQUENCE [LARGE SCALE GENOMIC DNA]</scope>
</reference>
<reference key="2">
    <citation type="journal article" date="1990" name="Virology">
        <title>Appendix to 'The complete DNA sequence of vaccinia virus'.</title>
        <authorList>
            <person name="Goebel S.J."/>
            <person name="Johnson G.P."/>
            <person name="Perkus M.E."/>
            <person name="Davis S.W."/>
            <person name="Winslow J.P."/>
            <person name="Paoletti E."/>
        </authorList>
    </citation>
    <scope>NUCLEOTIDE SEQUENCE [LARGE SCALE GENOMIC DNA]</scope>
</reference>
<protein>
    <recommendedName>
        <fullName>Protein A47</fullName>
    </recommendedName>
</protein>
<feature type="chain" id="PRO_0000099338" description="Protein A47">
    <location>
        <begin position="1"/>
        <end position="244"/>
    </location>
</feature>
<keyword id="KW-1185">Reference proteome</keyword>